<feature type="chain" id="PRO_0000400188" description="1D-myo-inositol 2-acetamido-2-deoxy-alpha-D-glucopyranoside deacetylase">
    <location>
        <begin position="1"/>
        <end position="294"/>
    </location>
</feature>
<feature type="binding site" evidence="1">
    <location>
        <position position="13"/>
    </location>
    <ligand>
        <name>Zn(2+)</name>
        <dbReference type="ChEBI" id="CHEBI:29105"/>
    </ligand>
</feature>
<feature type="binding site" evidence="1">
    <location>
        <position position="16"/>
    </location>
    <ligand>
        <name>Zn(2+)</name>
        <dbReference type="ChEBI" id="CHEBI:29105"/>
    </ligand>
</feature>
<feature type="binding site" evidence="1">
    <location>
        <position position="148"/>
    </location>
    <ligand>
        <name>Zn(2+)</name>
        <dbReference type="ChEBI" id="CHEBI:29105"/>
    </ligand>
</feature>
<name>MSHB_GEOOG</name>
<comment type="function">
    <text evidence="1">Catalyzes the deacetylation of 1D-myo-inositol 2-acetamido-2-deoxy-alpha-D-glucopyranoside (GlcNAc-Ins) in the mycothiol biosynthesis pathway.</text>
</comment>
<comment type="catalytic activity">
    <reaction evidence="1">
        <text>1D-myo-inositol 2-acetamido-2-deoxy-alpha-D-glucopyranoside + H2O = 1D-myo-inositol 2-amino-2-deoxy-alpha-D-glucopyranoside + acetate</text>
        <dbReference type="Rhea" id="RHEA:26180"/>
        <dbReference type="ChEBI" id="CHEBI:15377"/>
        <dbReference type="ChEBI" id="CHEBI:30089"/>
        <dbReference type="ChEBI" id="CHEBI:52442"/>
        <dbReference type="ChEBI" id="CHEBI:58886"/>
        <dbReference type="EC" id="3.5.1.103"/>
    </reaction>
</comment>
<comment type="cofactor">
    <cofactor evidence="1">
        <name>Zn(2+)</name>
        <dbReference type="ChEBI" id="CHEBI:29105"/>
    </cofactor>
    <text evidence="1">Binds 1 zinc ion per subunit.</text>
</comment>
<comment type="similarity">
    <text evidence="1">Belongs to the MshB deacetylase family.</text>
</comment>
<dbReference type="EC" id="3.5.1.103" evidence="1"/>
<dbReference type="EMBL" id="CP001867">
    <property type="protein sequence ID" value="ADB73843.1"/>
    <property type="molecule type" value="Genomic_DNA"/>
</dbReference>
<dbReference type="SMR" id="D2S9Y0"/>
<dbReference type="STRING" id="526225.Gobs_1084"/>
<dbReference type="KEGG" id="gob:Gobs_1084"/>
<dbReference type="eggNOG" id="COG2120">
    <property type="taxonomic scope" value="Bacteria"/>
</dbReference>
<dbReference type="HOGENOM" id="CLU_049311_2_1_11"/>
<dbReference type="OrthoDB" id="158614at2"/>
<dbReference type="Proteomes" id="UP000001382">
    <property type="component" value="Chromosome"/>
</dbReference>
<dbReference type="GO" id="GO:0035595">
    <property type="term" value="F:N-acetylglucosaminylinositol deacetylase activity"/>
    <property type="evidence" value="ECO:0007669"/>
    <property type="project" value="UniProtKB-EC"/>
</dbReference>
<dbReference type="GO" id="GO:0008270">
    <property type="term" value="F:zinc ion binding"/>
    <property type="evidence" value="ECO:0007669"/>
    <property type="project" value="UniProtKB-UniRule"/>
</dbReference>
<dbReference type="GO" id="GO:0010125">
    <property type="term" value="P:mycothiol biosynthetic process"/>
    <property type="evidence" value="ECO:0007669"/>
    <property type="project" value="UniProtKB-UniRule"/>
</dbReference>
<dbReference type="Gene3D" id="3.40.50.10320">
    <property type="entry name" value="LmbE-like"/>
    <property type="match status" value="1"/>
</dbReference>
<dbReference type="HAMAP" id="MF_01696">
    <property type="entry name" value="MshB"/>
    <property type="match status" value="1"/>
</dbReference>
<dbReference type="InterPro" id="IPR003737">
    <property type="entry name" value="GlcNAc_PI_deacetylase-related"/>
</dbReference>
<dbReference type="InterPro" id="IPR024078">
    <property type="entry name" value="LmbE-like_dom_sf"/>
</dbReference>
<dbReference type="InterPro" id="IPR017810">
    <property type="entry name" value="Mycothiol_biosynthesis_MshB"/>
</dbReference>
<dbReference type="NCBIfam" id="TIGR03445">
    <property type="entry name" value="mycothiol_MshB"/>
    <property type="match status" value="1"/>
</dbReference>
<dbReference type="PANTHER" id="PTHR12993:SF26">
    <property type="entry name" value="1D-MYO-INOSITOL 2-ACETAMIDO-2-DEOXY-ALPHA-D-GLUCOPYRANOSIDE DEACETYLASE"/>
    <property type="match status" value="1"/>
</dbReference>
<dbReference type="PANTHER" id="PTHR12993">
    <property type="entry name" value="N-ACETYLGLUCOSAMINYL-PHOSPHATIDYLINOSITOL DE-N-ACETYLASE-RELATED"/>
    <property type="match status" value="1"/>
</dbReference>
<dbReference type="Pfam" id="PF02585">
    <property type="entry name" value="PIG-L"/>
    <property type="match status" value="1"/>
</dbReference>
<dbReference type="SUPFAM" id="SSF102588">
    <property type="entry name" value="LmbE-like"/>
    <property type="match status" value="1"/>
</dbReference>
<proteinExistence type="inferred from homology"/>
<keyword id="KW-0378">Hydrolase</keyword>
<keyword id="KW-0479">Metal-binding</keyword>
<keyword id="KW-1185">Reference proteome</keyword>
<keyword id="KW-0862">Zinc</keyword>
<protein>
    <recommendedName>
        <fullName evidence="1">1D-myo-inositol 2-acetamido-2-deoxy-alpha-D-glucopyranoside deacetylase</fullName>
        <shortName evidence="1">GlcNAc-Ins deacetylase</shortName>
        <ecNumber evidence="1">3.5.1.103</ecNumber>
    </recommendedName>
    <alternativeName>
        <fullName>N-acetyl-1-D-myo-inositol 2-amino-2-deoxy-alpha-D-glucopyranoside deacetylase</fullName>
    </alternativeName>
</protein>
<organism>
    <name type="scientific">Geodermatophilus obscurus (strain ATCC 25078 / DSM 43160 / JCM 3152 / CCUG 61914 / KCC A-0152 / KCTC 9177 / NBRC 13315 / NRRL B-3577 / G-20)</name>
    <dbReference type="NCBI Taxonomy" id="526225"/>
    <lineage>
        <taxon>Bacteria</taxon>
        <taxon>Bacillati</taxon>
        <taxon>Actinomycetota</taxon>
        <taxon>Actinomycetes</taxon>
        <taxon>Geodermatophilales</taxon>
        <taxon>Geodermatophilaceae</taxon>
        <taxon>Geodermatophilus</taxon>
    </lineage>
</organism>
<sequence>MTPSRRLLLVHAHPDDETINNGATMARYVAEGAQVTLLTCTLGEEGEVLVPELELLAAEHADQLGGYRIGELRAAMEALGVADWRFLGGPGRYRDSGMMGTPANDEPRAFWNADLDEAVAHAVAVVREVRPQVVVTYDENGGYGHPDHIQAHRVAMRAVDAAADPAYRPDLGGAWEVAKVYWCCVPRSVLRQGIEALAALGEESPFASLDDVDDLPFAVPDELVAAAVDGRAHARRKDAAMRAHATQITVDGPFFALSNNLGQEVLGTEYYRLVRGERGTADGWEDDLFAGLPG</sequence>
<evidence type="ECO:0000255" key="1">
    <source>
        <dbReference type="HAMAP-Rule" id="MF_01696"/>
    </source>
</evidence>
<gene>
    <name evidence="1" type="primary">mshB</name>
    <name type="ordered locus">Gobs_1084</name>
</gene>
<reference key="1">
    <citation type="submission" date="2010-01" db="EMBL/GenBank/DDBJ databases">
        <title>The complete genome of Geodermatophilus obscurus DSM 43160.</title>
        <authorList>
            <consortium name="US DOE Joint Genome Institute (JGI-PGF)"/>
            <person name="Lucas S."/>
            <person name="Copeland A."/>
            <person name="Lapidus A."/>
            <person name="Glavina del Rio T."/>
            <person name="Dalin E."/>
            <person name="Tice H."/>
            <person name="Bruce D."/>
            <person name="Goodwin L."/>
            <person name="Pitluck S."/>
            <person name="Kyrpides N."/>
            <person name="Mavromatis K."/>
            <person name="Ivanova N."/>
            <person name="Munk A.C."/>
            <person name="Brettin T."/>
            <person name="Detter J.C."/>
            <person name="Han C."/>
            <person name="Larimer F."/>
            <person name="Land M."/>
            <person name="Hauser L."/>
            <person name="Markowitz V."/>
            <person name="Cheng J.-F."/>
            <person name="Hugenholtz P."/>
            <person name="Woyke T."/>
            <person name="Wu D."/>
            <person name="Jando M."/>
            <person name="Schneider S."/>
            <person name="Klenk H.-P."/>
            <person name="Eisen J.A."/>
        </authorList>
    </citation>
    <scope>NUCLEOTIDE SEQUENCE [LARGE SCALE GENOMIC DNA]</scope>
    <source>
        <strain>ATCC 25078 / DSM 43160 / JCM 3152 / CCUG 61914 / KCC A-0152 / KCTC 9177 / NBRC 13315 / NRRL B-3577 / G-20</strain>
    </source>
</reference>
<accession>D2S9Y0</accession>